<dbReference type="EMBL" id="CH408077">
    <property type="protein sequence ID" value="EEQ37805.1"/>
    <property type="molecule type" value="Genomic_DNA"/>
</dbReference>
<dbReference type="RefSeq" id="XP_002618469.1">
    <property type="nucleotide sequence ID" value="XM_002618423.1"/>
</dbReference>
<dbReference type="SMR" id="C4Y146"/>
<dbReference type="FunCoup" id="C4Y146">
    <property type="interactions" value="11"/>
</dbReference>
<dbReference type="STRING" id="306902.C4Y146"/>
<dbReference type="GeneID" id="8498622"/>
<dbReference type="KEGG" id="clu:CLUG_01928"/>
<dbReference type="VEuPathDB" id="FungiDB:CLUG_01928"/>
<dbReference type="HOGENOM" id="CLU_011918_1_0_1"/>
<dbReference type="InParanoid" id="C4Y146"/>
<dbReference type="OMA" id="KWEFEAR"/>
<dbReference type="OrthoDB" id="113432at4891"/>
<dbReference type="Proteomes" id="UP000007703">
    <property type="component" value="Unassembled WGS sequence"/>
</dbReference>
<dbReference type="GO" id="GO:0005737">
    <property type="term" value="C:cytoplasm"/>
    <property type="evidence" value="ECO:0007669"/>
    <property type="project" value="UniProtKB-SubCell"/>
</dbReference>
<dbReference type="InterPro" id="IPR006571">
    <property type="entry name" value="TLDc_dom"/>
</dbReference>
<dbReference type="Pfam" id="PF07534">
    <property type="entry name" value="TLD"/>
    <property type="match status" value="1"/>
</dbReference>
<dbReference type="SMART" id="SM00584">
    <property type="entry name" value="TLDc"/>
    <property type="match status" value="1"/>
</dbReference>
<dbReference type="PROSITE" id="PS51886">
    <property type="entry name" value="TLDC"/>
    <property type="match status" value="1"/>
</dbReference>
<protein>
    <recommendedName>
        <fullName>Restriction of telomere capping protein 5</fullName>
    </recommendedName>
</protein>
<comment type="function">
    <text evidence="1">May be involved in a process influencing telomere capping.</text>
</comment>
<comment type="subcellular location">
    <subcellularLocation>
        <location evidence="1">Cytoplasm</location>
    </subcellularLocation>
</comment>
<comment type="similarity">
    <text evidence="3">Belongs to the RTC5 family.</text>
</comment>
<sequence length="646" mass="73072">MGQNASATKTQATYKQTLPKSRIKELFQTRALQTLSARELASIASKLNIASFNDSHVVTLTDLAYLLQLSNDKEKNVSSIHEDFACVVRILYDSLTILGNLPFLGDSLEADDNSQLTLKSLIVASAVHTGRINSFWNDAEYLKLLFISLSFPPTKQSSEKAAEKWEQVNEDSAELSFRTVPDEKDSSAQIALKIKWADFEHLTTYDDLDVECLRVPADNMVKLITLLLLVRSVRLQSHDKMQFLLQERIEKCWNKFEGAALSLVRFMNVDVNASNMNSKCITYEQFNSGVVNGFLNLFTDVFRRLFENGFLGSIVADPKAPQPLNENIEATATEKESKAAADKKQERIKKAYNFEETRLVNDASLALIATALQASGINEEISRETVVELYNGAHAGFSIRSLESKIFKWQAPTIFLISGKRLRSKTIAQNKRYQQFEDMFPRFFRSTENPRKAWQTDSDKITYAVYVEEPWRNSNKSNFGNELTTIVNLSPRYDIYTSKHDPVIKGMSVYFNNLGMGIGFGNDQPINKNNVRRIIPGKVSLTVEANLEFAVFRHIFNSSANTSAFFNFSRQEAARNEDYEDRFMITDLEVWGIGSTKELEEQKKQWEWEEKQAQARQSVNVGTLSEDRALLEMAGLIGNHGSGGSV</sequence>
<organism>
    <name type="scientific">Clavispora lusitaniae (strain ATCC 42720)</name>
    <name type="common">Yeast</name>
    <name type="synonym">Candida lusitaniae</name>
    <dbReference type="NCBI Taxonomy" id="306902"/>
    <lineage>
        <taxon>Eukaryota</taxon>
        <taxon>Fungi</taxon>
        <taxon>Dikarya</taxon>
        <taxon>Ascomycota</taxon>
        <taxon>Saccharomycotina</taxon>
        <taxon>Pichiomycetes</taxon>
        <taxon>Metschnikowiaceae</taxon>
        <taxon>Clavispora</taxon>
    </lineage>
</organism>
<keyword id="KW-0963">Cytoplasm</keyword>
<keyword id="KW-1185">Reference proteome</keyword>
<gene>
    <name type="primary">RTC5</name>
    <name type="ORF">CLUG_01928</name>
</gene>
<reference key="1">
    <citation type="journal article" date="2009" name="Nature">
        <title>Evolution of pathogenicity and sexual reproduction in eight Candida genomes.</title>
        <authorList>
            <person name="Butler G."/>
            <person name="Rasmussen M.D."/>
            <person name="Lin M.F."/>
            <person name="Santos M.A.S."/>
            <person name="Sakthikumar S."/>
            <person name="Munro C.A."/>
            <person name="Rheinbay E."/>
            <person name="Grabherr M."/>
            <person name="Forche A."/>
            <person name="Reedy J.L."/>
            <person name="Agrafioti I."/>
            <person name="Arnaud M.B."/>
            <person name="Bates S."/>
            <person name="Brown A.J.P."/>
            <person name="Brunke S."/>
            <person name="Costanzo M.C."/>
            <person name="Fitzpatrick D.A."/>
            <person name="de Groot P.W.J."/>
            <person name="Harris D."/>
            <person name="Hoyer L.L."/>
            <person name="Hube B."/>
            <person name="Klis F.M."/>
            <person name="Kodira C."/>
            <person name="Lennard N."/>
            <person name="Logue M.E."/>
            <person name="Martin R."/>
            <person name="Neiman A.M."/>
            <person name="Nikolaou E."/>
            <person name="Quail M.A."/>
            <person name="Quinn J."/>
            <person name="Santos M.C."/>
            <person name="Schmitzberger F.F."/>
            <person name="Sherlock G."/>
            <person name="Shah P."/>
            <person name="Silverstein K.A.T."/>
            <person name="Skrzypek M.S."/>
            <person name="Soll D."/>
            <person name="Staggs R."/>
            <person name="Stansfield I."/>
            <person name="Stumpf M.P.H."/>
            <person name="Sudbery P.E."/>
            <person name="Srikantha T."/>
            <person name="Zeng Q."/>
            <person name="Berman J."/>
            <person name="Berriman M."/>
            <person name="Heitman J."/>
            <person name="Gow N.A.R."/>
            <person name="Lorenz M.C."/>
            <person name="Birren B.W."/>
            <person name="Kellis M."/>
            <person name="Cuomo C.A."/>
        </authorList>
    </citation>
    <scope>NUCLEOTIDE SEQUENCE [LARGE SCALE GENOMIC DNA]</scope>
    <source>
        <strain>ATCC 42720</strain>
    </source>
</reference>
<evidence type="ECO:0000250" key="1"/>
<evidence type="ECO:0000255" key="2">
    <source>
        <dbReference type="PROSITE-ProRule" id="PRU01234"/>
    </source>
</evidence>
<evidence type="ECO:0000305" key="3"/>
<proteinExistence type="inferred from homology"/>
<feature type="chain" id="PRO_0000408821" description="Restriction of telomere capping protein 5">
    <location>
        <begin position="1"/>
        <end position="646"/>
    </location>
</feature>
<feature type="domain" description="TLDc" evidence="2">
    <location>
        <begin position="358"/>
        <end position="594"/>
    </location>
</feature>
<accession>C4Y146</accession>
<name>RTC5_CLAL4</name>